<organism>
    <name type="scientific">Acaryochloris marina (strain MBIC 11017)</name>
    <dbReference type="NCBI Taxonomy" id="329726"/>
    <lineage>
        <taxon>Bacteria</taxon>
        <taxon>Bacillati</taxon>
        <taxon>Cyanobacteriota</taxon>
        <taxon>Cyanophyceae</taxon>
        <taxon>Acaryochloridales</taxon>
        <taxon>Acaryochloridaceae</taxon>
        <taxon>Acaryochloris</taxon>
    </lineage>
</organism>
<name>PANB_ACAM1</name>
<gene>
    <name evidence="1" type="primary">panB</name>
    <name type="ordered locus">AM1_2048</name>
</gene>
<feature type="chain" id="PRO_1000076814" description="3-methyl-2-oxobutanoate hydroxymethyltransferase">
    <location>
        <begin position="1"/>
        <end position="259"/>
    </location>
</feature>
<feature type="active site" description="Proton acceptor" evidence="1">
    <location>
        <position position="183"/>
    </location>
</feature>
<feature type="binding site" evidence="1">
    <location>
        <begin position="44"/>
        <end position="45"/>
    </location>
    <ligand>
        <name>3-methyl-2-oxobutanoate</name>
        <dbReference type="ChEBI" id="CHEBI:11851"/>
    </ligand>
</feature>
<feature type="binding site" evidence="1">
    <location>
        <position position="44"/>
    </location>
    <ligand>
        <name>Mg(2+)</name>
        <dbReference type="ChEBI" id="CHEBI:18420"/>
    </ligand>
</feature>
<feature type="binding site" evidence="1">
    <location>
        <position position="83"/>
    </location>
    <ligand>
        <name>3-methyl-2-oxobutanoate</name>
        <dbReference type="ChEBI" id="CHEBI:11851"/>
    </ligand>
</feature>
<feature type="binding site" evidence="1">
    <location>
        <position position="83"/>
    </location>
    <ligand>
        <name>Mg(2+)</name>
        <dbReference type="ChEBI" id="CHEBI:18420"/>
    </ligand>
</feature>
<feature type="binding site" evidence="1">
    <location>
        <position position="113"/>
    </location>
    <ligand>
        <name>3-methyl-2-oxobutanoate</name>
        <dbReference type="ChEBI" id="CHEBI:11851"/>
    </ligand>
</feature>
<feature type="binding site" evidence="1">
    <location>
        <position position="115"/>
    </location>
    <ligand>
        <name>Mg(2+)</name>
        <dbReference type="ChEBI" id="CHEBI:18420"/>
    </ligand>
</feature>
<proteinExistence type="inferred from homology"/>
<sequence>MAVTIHQLRTWKEQGRPISVLTAWDFPFATLLDQAGVDVLLVGDSLAMVALGYPTTLPLTLDEMLYHAQAVTRGVNHALVICDLPFLSYQESPQQALRSAGTLLQQAGVAAVKLEGGYPDMAKTVHYLVDRGIPVMGHVGLTPQSVHQFSGYRRQGTSDVEADRILQEAIALEAAGAFAIVLEHIPAPLATKITQTLTIPTIGIGAGPGCDGQVLVTADMLGLSAWQPPFAKAYTNLQESITGAVQQFCDDVRHHQFPQ</sequence>
<protein>
    <recommendedName>
        <fullName evidence="1">3-methyl-2-oxobutanoate hydroxymethyltransferase</fullName>
        <ecNumber evidence="1">2.1.2.11</ecNumber>
    </recommendedName>
    <alternativeName>
        <fullName evidence="1">Ketopantoate hydroxymethyltransferase</fullName>
        <shortName evidence="1">KPHMT</shortName>
    </alternativeName>
</protein>
<dbReference type="EC" id="2.1.2.11" evidence="1"/>
<dbReference type="EMBL" id="CP000828">
    <property type="protein sequence ID" value="ABW27063.1"/>
    <property type="molecule type" value="Genomic_DNA"/>
</dbReference>
<dbReference type="RefSeq" id="WP_012162554.1">
    <property type="nucleotide sequence ID" value="NC_009925.1"/>
</dbReference>
<dbReference type="SMR" id="B0BYP7"/>
<dbReference type="STRING" id="329726.AM1_2048"/>
<dbReference type="KEGG" id="amr:AM1_2048"/>
<dbReference type="eggNOG" id="COG0413">
    <property type="taxonomic scope" value="Bacteria"/>
</dbReference>
<dbReference type="HOGENOM" id="CLU_036645_1_0_3"/>
<dbReference type="OrthoDB" id="9781789at2"/>
<dbReference type="UniPathway" id="UPA00028">
    <property type="reaction ID" value="UER00003"/>
</dbReference>
<dbReference type="Proteomes" id="UP000000268">
    <property type="component" value="Chromosome"/>
</dbReference>
<dbReference type="GO" id="GO:0005737">
    <property type="term" value="C:cytoplasm"/>
    <property type="evidence" value="ECO:0007669"/>
    <property type="project" value="UniProtKB-SubCell"/>
</dbReference>
<dbReference type="GO" id="GO:0003864">
    <property type="term" value="F:3-methyl-2-oxobutanoate hydroxymethyltransferase activity"/>
    <property type="evidence" value="ECO:0007669"/>
    <property type="project" value="UniProtKB-UniRule"/>
</dbReference>
<dbReference type="GO" id="GO:0000287">
    <property type="term" value="F:magnesium ion binding"/>
    <property type="evidence" value="ECO:0007669"/>
    <property type="project" value="TreeGrafter"/>
</dbReference>
<dbReference type="GO" id="GO:0015940">
    <property type="term" value="P:pantothenate biosynthetic process"/>
    <property type="evidence" value="ECO:0007669"/>
    <property type="project" value="UniProtKB-UniRule"/>
</dbReference>
<dbReference type="CDD" id="cd06557">
    <property type="entry name" value="KPHMT-like"/>
    <property type="match status" value="1"/>
</dbReference>
<dbReference type="FunFam" id="3.20.20.60:FF:000003">
    <property type="entry name" value="3-methyl-2-oxobutanoate hydroxymethyltransferase"/>
    <property type="match status" value="1"/>
</dbReference>
<dbReference type="Gene3D" id="3.20.20.60">
    <property type="entry name" value="Phosphoenolpyruvate-binding domains"/>
    <property type="match status" value="1"/>
</dbReference>
<dbReference type="HAMAP" id="MF_00156">
    <property type="entry name" value="PanB"/>
    <property type="match status" value="1"/>
</dbReference>
<dbReference type="InterPro" id="IPR003700">
    <property type="entry name" value="Pantoate_hydroxy_MeTrfase"/>
</dbReference>
<dbReference type="InterPro" id="IPR015813">
    <property type="entry name" value="Pyrv/PenolPyrv_kinase-like_dom"/>
</dbReference>
<dbReference type="InterPro" id="IPR040442">
    <property type="entry name" value="Pyrv_kinase-like_dom_sf"/>
</dbReference>
<dbReference type="NCBIfam" id="TIGR00222">
    <property type="entry name" value="panB"/>
    <property type="match status" value="1"/>
</dbReference>
<dbReference type="NCBIfam" id="NF001452">
    <property type="entry name" value="PRK00311.1"/>
    <property type="match status" value="1"/>
</dbReference>
<dbReference type="PANTHER" id="PTHR20881">
    <property type="entry name" value="3-METHYL-2-OXOBUTANOATE HYDROXYMETHYLTRANSFERASE"/>
    <property type="match status" value="1"/>
</dbReference>
<dbReference type="PANTHER" id="PTHR20881:SF0">
    <property type="entry name" value="3-METHYL-2-OXOBUTANOATE HYDROXYMETHYLTRANSFERASE"/>
    <property type="match status" value="1"/>
</dbReference>
<dbReference type="Pfam" id="PF02548">
    <property type="entry name" value="Pantoate_transf"/>
    <property type="match status" value="1"/>
</dbReference>
<dbReference type="PIRSF" id="PIRSF000388">
    <property type="entry name" value="Pantoate_hydroxy_MeTrfase"/>
    <property type="match status" value="1"/>
</dbReference>
<dbReference type="SUPFAM" id="SSF51621">
    <property type="entry name" value="Phosphoenolpyruvate/pyruvate domain"/>
    <property type="match status" value="1"/>
</dbReference>
<reference key="1">
    <citation type="journal article" date="2008" name="Proc. Natl. Acad. Sci. U.S.A.">
        <title>Niche adaptation and genome expansion in the chlorophyll d-producing cyanobacterium Acaryochloris marina.</title>
        <authorList>
            <person name="Swingley W.D."/>
            <person name="Chen M."/>
            <person name="Cheung P.C."/>
            <person name="Conrad A.L."/>
            <person name="Dejesa L.C."/>
            <person name="Hao J."/>
            <person name="Honchak B.M."/>
            <person name="Karbach L.E."/>
            <person name="Kurdoglu A."/>
            <person name="Lahiri S."/>
            <person name="Mastrian S.D."/>
            <person name="Miyashita H."/>
            <person name="Page L."/>
            <person name="Ramakrishna P."/>
            <person name="Satoh S."/>
            <person name="Sattley W.M."/>
            <person name="Shimada Y."/>
            <person name="Taylor H.L."/>
            <person name="Tomo T."/>
            <person name="Tsuchiya T."/>
            <person name="Wang Z.T."/>
            <person name="Raymond J."/>
            <person name="Mimuro M."/>
            <person name="Blankenship R.E."/>
            <person name="Touchman J.W."/>
        </authorList>
    </citation>
    <scope>NUCLEOTIDE SEQUENCE [LARGE SCALE GENOMIC DNA]</scope>
    <source>
        <strain>MBIC 11017</strain>
    </source>
</reference>
<comment type="function">
    <text evidence="1">Catalyzes the reversible reaction in which hydroxymethyl group from 5,10-methylenetetrahydrofolate is transferred onto alpha-ketoisovalerate to form ketopantoate.</text>
</comment>
<comment type="catalytic activity">
    <reaction evidence="1">
        <text>3-methyl-2-oxobutanoate + (6R)-5,10-methylene-5,6,7,8-tetrahydrofolate + H2O = 2-dehydropantoate + (6S)-5,6,7,8-tetrahydrofolate</text>
        <dbReference type="Rhea" id="RHEA:11824"/>
        <dbReference type="ChEBI" id="CHEBI:11561"/>
        <dbReference type="ChEBI" id="CHEBI:11851"/>
        <dbReference type="ChEBI" id="CHEBI:15377"/>
        <dbReference type="ChEBI" id="CHEBI:15636"/>
        <dbReference type="ChEBI" id="CHEBI:57453"/>
        <dbReference type="EC" id="2.1.2.11"/>
    </reaction>
</comment>
<comment type="cofactor">
    <cofactor evidence="1">
        <name>Mg(2+)</name>
        <dbReference type="ChEBI" id="CHEBI:18420"/>
    </cofactor>
    <text evidence="1">Binds 1 Mg(2+) ion per subunit.</text>
</comment>
<comment type="pathway">
    <text evidence="1">Cofactor biosynthesis; (R)-pantothenate biosynthesis; (R)-pantoate from 3-methyl-2-oxobutanoate: step 1/2.</text>
</comment>
<comment type="subunit">
    <text evidence="1">Homodecamer; pentamer of dimers.</text>
</comment>
<comment type="subcellular location">
    <subcellularLocation>
        <location evidence="1">Cytoplasm</location>
    </subcellularLocation>
</comment>
<comment type="similarity">
    <text evidence="1">Belongs to the PanB family.</text>
</comment>
<accession>B0BYP7</accession>
<keyword id="KW-0963">Cytoplasm</keyword>
<keyword id="KW-0460">Magnesium</keyword>
<keyword id="KW-0479">Metal-binding</keyword>
<keyword id="KW-0566">Pantothenate biosynthesis</keyword>
<keyword id="KW-1185">Reference proteome</keyword>
<keyword id="KW-0808">Transferase</keyword>
<evidence type="ECO:0000255" key="1">
    <source>
        <dbReference type="HAMAP-Rule" id="MF_00156"/>
    </source>
</evidence>